<sequence>MNLNFMPLLHAYNHASIDFHFNSSARDFCVHEVPLYEFSNTGEHAVIQVRKSGLSTLEMLQIFSQILGVKIAELGYAGLKDKNALTTQFISLPKKYAPLLEKNTHNLQERNLKILSLNYHHNKIKLGHLKGNRFFMRFKKMTPLNAQKTKQVLEQIARFGMPNYFGSQRFGKFNDNHKEGLKILQNQTKFAHQKLNAFLISSYQSYLFNALLSKRLEISKIISAFSLKENLEFFKQNNLSVNSNALKALKNQAHPFKILEGDVMCHYPYGKFFDALELGKEGERFLNKEAAPTGLLDGKKALYAKNLSFEIEKEFQHNLLSSHAKTLGSRRFFWVFAENVTSQYMKEKAQFELGFYLPKGSYASALLKKIKHEKGEKYDKF</sequence>
<accession>B6JME7</accession>
<gene>
    <name evidence="1" type="primary">truD</name>
    <name type="ordered locus">HPP12_0923</name>
</gene>
<feature type="chain" id="PRO_1000136840" description="tRNA pseudouridine synthase D">
    <location>
        <begin position="1"/>
        <end position="381"/>
    </location>
</feature>
<feature type="domain" description="TRUD" evidence="1">
    <location>
        <begin position="160"/>
        <end position="335"/>
    </location>
</feature>
<feature type="active site" description="Nucleophile" evidence="1">
    <location>
        <position position="81"/>
    </location>
</feature>
<name>TRUD_HELP2</name>
<reference key="1">
    <citation type="submission" date="2008-10" db="EMBL/GenBank/DDBJ databases">
        <title>The complete genome sequence of Helicobacter pylori strain P12.</title>
        <authorList>
            <person name="Fischer W."/>
            <person name="Windhager L."/>
            <person name="Karnholz A."/>
            <person name="Zeiller M."/>
            <person name="Zimmer R."/>
            <person name="Haas R."/>
        </authorList>
    </citation>
    <scope>NUCLEOTIDE SEQUENCE [LARGE SCALE GENOMIC DNA]</scope>
    <source>
        <strain>P12</strain>
    </source>
</reference>
<dbReference type="EC" id="5.4.99.27" evidence="1"/>
<dbReference type="EMBL" id="CP001217">
    <property type="protein sequence ID" value="ACJ08075.1"/>
    <property type="molecule type" value="Genomic_DNA"/>
</dbReference>
<dbReference type="SMR" id="B6JME7"/>
<dbReference type="KEGG" id="hpp:HPP12_0923"/>
<dbReference type="HOGENOM" id="CLU_005281_4_0_7"/>
<dbReference type="Proteomes" id="UP000008198">
    <property type="component" value="Chromosome"/>
</dbReference>
<dbReference type="GO" id="GO:0005829">
    <property type="term" value="C:cytosol"/>
    <property type="evidence" value="ECO:0007669"/>
    <property type="project" value="TreeGrafter"/>
</dbReference>
<dbReference type="GO" id="GO:0003723">
    <property type="term" value="F:RNA binding"/>
    <property type="evidence" value="ECO:0007669"/>
    <property type="project" value="InterPro"/>
</dbReference>
<dbReference type="GO" id="GO:0160150">
    <property type="term" value="F:tRNA pseudouridine(13) synthase activity"/>
    <property type="evidence" value="ECO:0007669"/>
    <property type="project" value="UniProtKB-EC"/>
</dbReference>
<dbReference type="GO" id="GO:0031119">
    <property type="term" value="P:tRNA pseudouridine synthesis"/>
    <property type="evidence" value="ECO:0007669"/>
    <property type="project" value="UniProtKB-UniRule"/>
</dbReference>
<dbReference type="CDD" id="cd02575">
    <property type="entry name" value="PseudoU_synth_EcTruD"/>
    <property type="match status" value="1"/>
</dbReference>
<dbReference type="FunFam" id="3.30.2350.20:FF:000008">
    <property type="entry name" value="tRNA pseudouridine synthase D"/>
    <property type="match status" value="1"/>
</dbReference>
<dbReference type="Gene3D" id="3.30.2350.20">
    <property type="entry name" value="TruD, catalytic domain"/>
    <property type="match status" value="1"/>
</dbReference>
<dbReference type="HAMAP" id="MF_01082">
    <property type="entry name" value="TruD"/>
    <property type="match status" value="1"/>
</dbReference>
<dbReference type="InterPro" id="IPR020103">
    <property type="entry name" value="PsdUridine_synth_cat_dom_sf"/>
</dbReference>
<dbReference type="InterPro" id="IPR001656">
    <property type="entry name" value="PsdUridine_synth_TruD"/>
</dbReference>
<dbReference type="InterPro" id="IPR020119">
    <property type="entry name" value="PsdUridine_synth_TruD_CS"/>
</dbReference>
<dbReference type="InterPro" id="IPR011760">
    <property type="entry name" value="PsdUridine_synth_TruD_insert"/>
</dbReference>
<dbReference type="InterPro" id="IPR042214">
    <property type="entry name" value="TruD_catalytic"/>
</dbReference>
<dbReference type="InterPro" id="IPR050170">
    <property type="entry name" value="TruD_pseudoU_synthase"/>
</dbReference>
<dbReference type="NCBIfam" id="NF002154">
    <property type="entry name" value="PRK00984.1-3"/>
    <property type="match status" value="1"/>
</dbReference>
<dbReference type="NCBIfam" id="TIGR00094">
    <property type="entry name" value="tRNA_TruD_broad"/>
    <property type="match status" value="1"/>
</dbReference>
<dbReference type="PANTHER" id="PTHR47811">
    <property type="entry name" value="TRNA PSEUDOURIDINE SYNTHASE D"/>
    <property type="match status" value="1"/>
</dbReference>
<dbReference type="PANTHER" id="PTHR47811:SF1">
    <property type="entry name" value="TRNA PSEUDOURIDINE SYNTHASE D"/>
    <property type="match status" value="1"/>
</dbReference>
<dbReference type="Pfam" id="PF01142">
    <property type="entry name" value="TruD"/>
    <property type="match status" value="1"/>
</dbReference>
<dbReference type="PIRSF" id="PIRSF037016">
    <property type="entry name" value="Pseudouridin_synth_euk_prd"/>
    <property type="match status" value="1"/>
</dbReference>
<dbReference type="SUPFAM" id="SSF55120">
    <property type="entry name" value="Pseudouridine synthase"/>
    <property type="match status" value="1"/>
</dbReference>
<dbReference type="PROSITE" id="PS50984">
    <property type="entry name" value="TRUD"/>
    <property type="match status" value="1"/>
</dbReference>
<dbReference type="PROSITE" id="PS01268">
    <property type="entry name" value="UPF0024"/>
    <property type="match status" value="1"/>
</dbReference>
<keyword id="KW-0413">Isomerase</keyword>
<keyword id="KW-0819">tRNA processing</keyword>
<comment type="function">
    <text evidence="1">Responsible for synthesis of pseudouridine from uracil-13 in transfer RNAs.</text>
</comment>
<comment type="catalytic activity">
    <reaction evidence="1">
        <text>uridine(13) in tRNA = pseudouridine(13) in tRNA</text>
        <dbReference type="Rhea" id="RHEA:42540"/>
        <dbReference type="Rhea" id="RHEA-COMP:10105"/>
        <dbReference type="Rhea" id="RHEA-COMP:10106"/>
        <dbReference type="ChEBI" id="CHEBI:65314"/>
        <dbReference type="ChEBI" id="CHEBI:65315"/>
        <dbReference type="EC" id="5.4.99.27"/>
    </reaction>
</comment>
<comment type="similarity">
    <text evidence="1">Belongs to the pseudouridine synthase TruD family.</text>
</comment>
<protein>
    <recommendedName>
        <fullName evidence="1">tRNA pseudouridine synthase D</fullName>
        <ecNumber evidence="1">5.4.99.27</ecNumber>
    </recommendedName>
    <alternativeName>
        <fullName evidence="1">tRNA pseudouridine(13) synthase</fullName>
    </alternativeName>
    <alternativeName>
        <fullName evidence="1">tRNA pseudouridylate synthase D</fullName>
    </alternativeName>
    <alternativeName>
        <fullName evidence="1">tRNA-uridine isomerase D</fullName>
    </alternativeName>
</protein>
<organism>
    <name type="scientific">Helicobacter pylori (strain P12)</name>
    <dbReference type="NCBI Taxonomy" id="570508"/>
    <lineage>
        <taxon>Bacteria</taxon>
        <taxon>Pseudomonadati</taxon>
        <taxon>Campylobacterota</taxon>
        <taxon>Epsilonproteobacteria</taxon>
        <taxon>Campylobacterales</taxon>
        <taxon>Helicobacteraceae</taxon>
        <taxon>Helicobacter</taxon>
    </lineage>
</organism>
<proteinExistence type="inferred from homology"/>
<evidence type="ECO:0000255" key="1">
    <source>
        <dbReference type="HAMAP-Rule" id="MF_01082"/>
    </source>
</evidence>